<protein>
    <recommendedName>
        <fullName evidence="1">Transcriptional repressor NrdR</fullName>
    </recommendedName>
</protein>
<keyword id="KW-0067">ATP-binding</keyword>
<keyword id="KW-0238">DNA-binding</keyword>
<keyword id="KW-0479">Metal-binding</keyword>
<keyword id="KW-0547">Nucleotide-binding</keyword>
<keyword id="KW-0678">Repressor</keyword>
<keyword id="KW-0804">Transcription</keyword>
<keyword id="KW-0805">Transcription regulation</keyword>
<keyword id="KW-0862">Zinc</keyword>
<keyword id="KW-0863">Zinc-finger</keyword>
<feature type="chain" id="PRO_1000191802" description="Transcriptional repressor NrdR">
    <location>
        <begin position="1"/>
        <end position="154"/>
    </location>
</feature>
<feature type="domain" description="ATP-cone" evidence="1">
    <location>
        <begin position="49"/>
        <end position="139"/>
    </location>
</feature>
<feature type="zinc finger region" evidence="1">
    <location>
        <begin position="3"/>
        <end position="34"/>
    </location>
</feature>
<evidence type="ECO:0000255" key="1">
    <source>
        <dbReference type="HAMAP-Rule" id="MF_00440"/>
    </source>
</evidence>
<reference key="1">
    <citation type="journal article" date="2011" name="J. Bacteriol.">
        <title>Genome sequence of lineage III Listeria monocytogenes strain HCC23.</title>
        <authorList>
            <person name="Steele C.L."/>
            <person name="Donaldson J.R."/>
            <person name="Paul D."/>
            <person name="Banes M.M."/>
            <person name="Arick T."/>
            <person name="Bridges S.M."/>
            <person name="Lawrence M.L."/>
        </authorList>
    </citation>
    <scope>NUCLEOTIDE SEQUENCE [LARGE SCALE GENOMIC DNA]</scope>
    <source>
        <strain>HCC23</strain>
    </source>
</reference>
<gene>
    <name evidence="1" type="primary">nrdR</name>
    <name type="ordered locus">LMHCC_1007</name>
</gene>
<proteinExistence type="inferred from homology"/>
<accession>B8DHI6</accession>
<dbReference type="EMBL" id="CP001175">
    <property type="protein sequence ID" value="ACK39355.1"/>
    <property type="molecule type" value="Genomic_DNA"/>
</dbReference>
<dbReference type="RefSeq" id="WP_003723246.1">
    <property type="nucleotide sequence ID" value="NC_011660.1"/>
</dbReference>
<dbReference type="SMR" id="B8DHI6"/>
<dbReference type="KEGG" id="lmh:LMHCC_1007"/>
<dbReference type="HOGENOM" id="CLU_108412_0_0_9"/>
<dbReference type="GO" id="GO:0005524">
    <property type="term" value="F:ATP binding"/>
    <property type="evidence" value="ECO:0007669"/>
    <property type="project" value="UniProtKB-KW"/>
</dbReference>
<dbReference type="GO" id="GO:0003677">
    <property type="term" value="F:DNA binding"/>
    <property type="evidence" value="ECO:0007669"/>
    <property type="project" value="UniProtKB-KW"/>
</dbReference>
<dbReference type="GO" id="GO:0008270">
    <property type="term" value="F:zinc ion binding"/>
    <property type="evidence" value="ECO:0007669"/>
    <property type="project" value="UniProtKB-UniRule"/>
</dbReference>
<dbReference type="GO" id="GO:0045892">
    <property type="term" value="P:negative regulation of DNA-templated transcription"/>
    <property type="evidence" value="ECO:0007669"/>
    <property type="project" value="UniProtKB-UniRule"/>
</dbReference>
<dbReference type="HAMAP" id="MF_00440">
    <property type="entry name" value="NrdR"/>
    <property type="match status" value="1"/>
</dbReference>
<dbReference type="InterPro" id="IPR005144">
    <property type="entry name" value="ATP-cone_dom"/>
</dbReference>
<dbReference type="InterPro" id="IPR055173">
    <property type="entry name" value="NrdR-like_N"/>
</dbReference>
<dbReference type="InterPro" id="IPR003796">
    <property type="entry name" value="RNR_NrdR-like"/>
</dbReference>
<dbReference type="NCBIfam" id="TIGR00244">
    <property type="entry name" value="transcriptional regulator NrdR"/>
    <property type="match status" value="1"/>
</dbReference>
<dbReference type="PANTHER" id="PTHR30455">
    <property type="entry name" value="TRANSCRIPTIONAL REPRESSOR NRDR"/>
    <property type="match status" value="1"/>
</dbReference>
<dbReference type="PANTHER" id="PTHR30455:SF2">
    <property type="entry name" value="TRANSCRIPTIONAL REPRESSOR NRDR"/>
    <property type="match status" value="1"/>
</dbReference>
<dbReference type="Pfam" id="PF03477">
    <property type="entry name" value="ATP-cone"/>
    <property type="match status" value="1"/>
</dbReference>
<dbReference type="Pfam" id="PF22811">
    <property type="entry name" value="Zn_ribbon_NrdR"/>
    <property type="match status" value="1"/>
</dbReference>
<dbReference type="PROSITE" id="PS51161">
    <property type="entry name" value="ATP_CONE"/>
    <property type="match status" value="1"/>
</dbReference>
<name>NRDR_LISMH</name>
<organism>
    <name type="scientific">Listeria monocytogenes serotype 4a (strain HCC23)</name>
    <dbReference type="NCBI Taxonomy" id="552536"/>
    <lineage>
        <taxon>Bacteria</taxon>
        <taxon>Bacillati</taxon>
        <taxon>Bacillota</taxon>
        <taxon>Bacilli</taxon>
        <taxon>Bacillales</taxon>
        <taxon>Listeriaceae</taxon>
        <taxon>Listeria</taxon>
    </lineage>
</organism>
<sequence length="154" mass="17937">MRCPTCQYNGTRVVDSRPADDGNSIRRRRECEKCGFRFTTFEKVEESPLIVVKKDGAREEFAREKVRRGLIRACEKRPVSAEQIEEIVNEVERELRNIGDSEIASDLIGEKVMNKLANLDEVAYVRFASVYRQFKDISVFVEELKDLMEKNKDR</sequence>
<comment type="function">
    <text evidence="1">Negatively regulates transcription of bacterial ribonucleotide reductase nrd genes and operons by binding to NrdR-boxes.</text>
</comment>
<comment type="cofactor">
    <cofactor evidence="1">
        <name>Zn(2+)</name>
        <dbReference type="ChEBI" id="CHEBI:29105"/>
    </cofactor>
    <text evidence="1">Binds 1 zinc ion.</text>
</comment>
<comment type="similarity">
    <text evidence="1">Belongs to the NrdR family.</text>
</comment>